<gene>
    <name type="primary">sigD</name>
    <name type="ORF">DDB_G0267474</name>
</gene>
<proteinExistence type="evidence at transcript level"/>
<reference key="1">
    <citation type="journal article" date="2003" name="Eukaryot. Cell">
        <title>Dictyostelium discoideum developmentally regulated genes whose expression is dependent on MADS box transcription factor SrfA.</title>
        <authorList>
            <person name="Escalante R."/>
            <person name="Moreno N."/>
            <person name="Sastre L."/>
        </authorList>
    </citation>
    <scope>NUCLEOTIDE SEQUENCE [GENOMIC DNA]</scope>
    <scope>DEVELOPMENTAL STAGE</scope>
    <scope>INDUCTION</scope>
    <source>
        <strain>AX4</strain>
    </source>
</reference>
<reference key="2">
    <citation type="journal article" date="2005" name="Nature">
        <title>The genome of the social amoeba Dictyostelium discoideum.</title>
        <authorList>
            <person name="Eichinger L."/>
            <person name="Pachebat J.A."/>
            <person name="Gloeckner G."/>
            <person name="Rajandream M.A."/>
            <person name="Sucgang R."/>
            <person name="Berriman M."/>
            <person name="Song J."/>
            <person name="Olsen R."/>
            <person name="Szafranski K."/>
            <person name="Xu Q."/>
            <person name="Tunggal B."/>
            <person name="Kummerfeld S."/>
            <person name="Madera M."/>
            <person name="Konfortov B.A."/>
            <person name="Rivero F."/>
            <person name="Bankier A.T."/>
            <person name="Lehmann R."/>
            <person name="Hamlin N."/>
            <person name="Davies R."/>
            <person name="Gaudet P."/>
            <person name="Fey P."/>
            <person name="Pilcher K."/>
            <person name="Chen G."/>
            <person name="Saunders D."/>
            <person name="Sodergren E.J."/>
            <person name="Davis P."/>
            <person name="Kerhornou A."/>
            <person name="Nie X."/>
            <person name="Hall N."/>
            <person name="Anjard C."/>
            <person name="Hemphill L."/>
            <person name="Bason N."/>
            <person name="Farbrother P."/>
            <person name="Desany B."/>
            <person name="Just E."/>
            <person name="Morio T."/>
            <person name="Rost R."/>
            <person name="Churcher C.M."/>
            <person name="Cooper J."/>
            <person name="Haydock S."/>
            <person name="van Driessche N."/>
            <person name="Cronin A."/>
            <person name="Goodhead I."/>
            <person name="Muzny D.M."/>
            <person name="Mourier T."/>
            <person name="Pain A."/>
            <person name="Lu M."/>
            <person name="Harper D."/>
            <person name="Lindsay R."/>
            <person name="Hauser H."/>
            <person name="James K.D."/>
            <person name="Quiles M."/>
            <person name="Madan Babu M."/>
            <person name="Saito T."/>
            <person name="Buchrieser C."/>
            <person name="Wardroper A."/>
            <person name="Felder M."/>
            <person name="Thangavelu M."/>
            <person name="Johnson D."/>
            <person name="Knights A."/>
            <person name="Loulseged H."/>
            <person name="Mungall K.L."/>
            <person name="Oliver K."/>
            <person name="Price C."/>
            <person name="Quail M.A."/>
            <person name="Urushihara H."/>
            <person name="Hernandez J."/>
            <person name="Rabbinowitsch E."/>
            <person name="Steffen D."/>
            <person name="Sanders M."/>
            <person name="Ma J."/>
            <person name="Kohara Y."/>
            <person name="Sharp S."/>
            <person name="Simmonds M.N."/>
            <person name="Spiegler S."/>
            <person name="Tivey A."/>
            <person name="Sugano S."/>
            <person name="White B."/>
            <person name="Walker D."/>
            <person name="Woodward J.R."/>
            <person name="Winckler T."/>
            <person name="Tanaka Y."/>
            <person name="Shaulsky G."/>
            <person name="Schleicher M."/>
            <person name="Weinstock G.M."/>
            <person name="Rosenthal A."/>
            <person name="Cox E.C."/>
            <person name="Chisholm R.L."/>
            <person name="Gibbs R.A."/>
            <person name="Loomis W.F."/>
            <person name="Platzer M."/>
            <person name="Kay R.R."/>
            <person name="Williams J.G."/>
            <person name="Dear P.H."/>
            <person name="Noegel A.A."/>
            <person name="Barrell B.G."/>
            <person name="Kuspa A."/>
        </authorList>
    </citation>
    <scope>NUCLEOTIDE SEQUENCE [LARGE SCALE GENOMIC DNA]</scope>
    <source>
        <strain>AX4</strain>
    </source>
</reference>
<reference key="3">
    <citation type="journal article" date="2004" name="Eukaryot. Cell">
        <title>Identification of genes dependent on the MADS box transcription factor SrfA in Dictyostelium discoideum development.</title>
        <authorList>
            <person name="Escalante R."/>
            <person name="Iranfar N."/>
            <person name="Sastre L."/>
            <person name="Loomis W.F."/>
        </authorList>
    </citation>
    <scope>DEVELOPMENTAL STAGE</scope>
    <scope>INDUCTION BY SRFA</scope>
</reference>
<sequence>MKKVITLLALMAAAQIYAQGQECINLSENECHRNSSCVPVNFKKCCGDQQFACYEGDFNSCHYITKCYKSSKSLDVIESTNECYIPPAGYELFEPVSSCTNDELKHCSDQGKQCIFKRNDCPNPTSCCPGHGVCEDFNRSESGSGNKEQISTTGNTGPQTRGFTISGTGGTGSVPIDACTNVLCQQGEHCEVDQDGRAHCYVNIESIGTLPLGCLNVVCQPHQHCEIDKESGLAHCVLDINPIGFTTIDASSTVAGSSSTTGGSGGTGSNDICSNVHCPDNYHCEMRQDGKAQCVADINAIGFTTSGASTNGLIPPASTGWSDVCSNVICPPGYYCQKNEQTGKADCLNYSSSTTGGGTGSTTGSIDVCSNVICPPYFHCEKNDKGWAQCAADINAIGFSTSSTNGLVSTTGSNDVCQNVHCPQFFKCEKNENGLGECVSTLIPL</sequence>
<protein>
    <recommendedName>
        <fullName>Probable spore coat protein sigD</fullName>
    </recommendedName>
    <alternativeName>
        <fullName>SrfA-induced gene D protein</fullName>
    </alternativeName>
</protein>
<feature type="signal peptide" evidence="2">
    <location>
        <begin position="1"/>
        <end position="20"/>
    </location>
</feature>
<feature type="chain" id="PRO_0000346778" description="Probable spore coat protein sigD">
    <location>
        <begin position="21"/>
        <end position="445"/>
    </location>
</feature>
<feature type="domain" description="DSCP-N">
    <location>
        <begin position="21"/>
        <end position="139"/>
    </location>
</feature>
<feature type="domain" description="Follistatin-like 1">
    <location>
        <begin position="178"/>
        <end position="201"/>
    </location>
</feature>
<feature type="domain" description="Follistatin-like 2">
    <location>
        <begin position="213"/>
        <end position="237"/>
    </location>
</feature>
<feature type="domain" description="Follistatin-like 3">
    <location>
        <begin position="272"/>
        <end position="295"/>
    </location>
</feature>
<feature type="domain" description="Follistatin-like 4">
    <location>
        <begin position="324"/>
        <end position="348"/>
    </location>
</feature>
<feature type="domain" description="Follistatin-like 5">
    <location>
        <begin position="368"/>
        <end position="391"/>
    </location>
</feature>
<feature type="domain" description="Follistatin-like 6">
    <location>
        <begin position="416"/>
        <end position="439"/>
    </location>
</feature>
<feature type="region of interest" description="Disordered" evidence="3">
    <location>
        <begin position="141"/>
        <end position="161"/>
    </location>
</feature>
<feature type="compositionally biased region" description="Polar residues" evidence="3">
    <location>
        <begin position="141"/>
        <end position="159"/>
    </location>
</feature>
<dbReference type="EMBL" id="AY387647">
    <property type="protein sequence ID" value="AAQ95661.1"/>
    <property type="molecule type" value="Genomic_DNA"/>
</dbReference>
<dbReference type="EMBL" id="AAFI02000003">
    <property type="protein sequence ID" value="EAL73190.1"/>
    <property type="molecule type" value="Genomic_DNA"/>
</dbReference>
<dbReference type="RefSeq" id="XP_647451.1">
    <property type="nucleotide sequence ID" value="XM_642359.1"/>
</dbReference>
<dbReference type="STRING" id="44689.Q6TU45"/>
<dbReference type="PaxDb" id="44689-DDB0191296"/>
<dbReference type="EnsemblProtists" id="EAL73190">
    <property type="protein sequence ID" value="EAL73190"/>
    <property type="gene ID" value="DDB_G0267474"/>
</dbReference>
<dbReference type="GeneID" id="8616258"/>
<dbReference type="KEGG" id="ddi:DDB_G0267474"/>
<dbReference type="dictyBase" id="DDB_G0267474">
    <property type="gene designation" value="sigD"/>
</dbReference>
<dbReference type="VEuPathDB" id="AmoebaDB:DDB_G0267474"/>
<dbReference type="HOGENOM" id="CLU_615989_0_0_1"/>
<dbReference type="InParanoid" id="Q6TU45"/>
<dbReference type="PhylomeDB" id="Q6TU45"/>
<dbReference type="PRO" id="PR:Q6TU45"/>
<dbReference type="Proteomes" id="UP000002195">
    <property type="component" value="Chromosome 1"/>
</dbReference>
<dbReference type="GO" id="GO:0031160">
    <property type="term" value="C:spore wall"/>
    <property type="evidence" value="ECO:0007669"/>
    <property type="project" value="UniProtKB-ARBA"/>
</dbReference>
<dbReference type="GO" id="GO:0030435">
    <property type="term" value="P:sporulation resulting in formation of a cellular spore"/>
    <property type="evidence" value="ECO:0007669"/>
    <property type="project" value="UniProtKB-KW"/>
</dbReference>
<dbReference type="InterPro" id="IPR007643">
    <property type="entry name" value="Dict_spore_N"/>
</dbReference>
<dbReference type="InterPro" id="IPR003645">
    <property type="entry name" value="Fol_N"/>
</dbReference>
<dbReference type="Pfam" id="PF04562">
    <property type="entry name" value="Dicty_spore_N"/>
    <property type="match status" value="1"/>
</dbReference>
<dbReference type="SMART" id="SM00274">
    <property type="entry name" value="FOLN"/>
    <property type="match status" value="6"/>
</dbReference>
<keyword id="KW-1185">Reference proteome</keyword>
<keyword id="KW-0677">Repeat</keyword>
<keyword id="KW-0732">Signal</keyword>
<keyword id="KW-0749">Sporulation</keyword>
<name>SIGD_DICDI</name>
<evidence type="ECO:0000250" key="1"/>
<evidence type="ECO:0000255" key="2"/>
<evidence type="ECO:0000256" key="3">
    <source>
        <dbReference type="SAM" id="MobiDB-lite"/>
    </source>
</evidence>
<evidence type="ECO:0000269" key="4">
    <source>
    </source>
</evidence>
<evidence type="ECO:0000269" key="5">
    <source>
    </source>
</evidence>
<comment type="function">
    <text evidence="1">May contribute to the structure of the coat at the interface between the middle, cellulosic layer and the outer, electron-dense, proteinaceous layer.</text>
</comment>
<comment type="developmental stage">
    <text evidence="4 5">Expressed at late stage of development (20 to 24 hours).</text>
</comment>
<comment type="induction">
    <text evidence="4 5">By cAMP and the MADS-box protein srfA.</text>
</comment>
<accession>Q6TU45</accession>
<accession>Q55FT2</accession>
<organism>
    <name type="scientific">Dictyostelium discoideum</name>
    <name type="common">Social amoeba</name>
    <dbReference type="NCBI Taxonomy" id="44689"/>
    <lineage>
        <taxon>Eukaryota</taxon>
        <taxon>Amoebozoa</taxon>
        <taxon>Evosea</taxon>
        <taxon>Eumycetozoa</taxon>
        <taxon>Dictyostelia</taxon>
        <taxon>Dictyosteliales</taxon>
        <taxon>Dictyosteliaceae</taxon>
        <taxon>Dictyostelium</taxon>
    </lineage>
</organism>